<name>UBX_DROHY</name>
<dbReference type="EMBL" id="U03178">
    <property type="protein sequence ID" value="AAA03568.1"/>
    <property type="molecule type" value="mRNA"/>
</dbReference>
<dbReference type="EnsemblMetazoa" id="XM_023308803.2">
    <property type="protein sequence ID" value="XP_023164571.1"/>
    <property type="gene ID" value="LOC111595201"/>
</dbReference>
<dbReference type="OrthoDB" id="6159439at2759"/>
<dbReference type="Proteomes" id="UP000504633">
    <property type="component" value="Unplaced"/>
</dbReference>
<dbReference type="GO" id="GO:0005634">
    <property type="term" value="C:nucleus"/>
    <property type="evidence" value="ECO:0007669"/>
    <property type="project" value="UniProtKB-SubCell"/>
</dbReference>
<dbReference type="GO" id="GO:0003677">
    <property type="term" value="F:DNA binding"/>
    <property type="evidence" value="ECO:0000304"/>
    <property type="project" value="UniProtKB"/>
</dbReference>
<dbReference type="GO" id="GO:0003700">
    <property type="term" value="F:DNA-binding transcription factor activity"/>
    <property type="evidence" value="ECO:0007669"/>
    <property type="project" value="InterPro"/>
</dbReference>
<dbReference type="InterPro" id="IPR001827">
    <property type="entry name" value="Homeobox_Antennapedia_CS"/>
</dbReference>
<dbReference type="PROSITE" id="PS00032">
    <property type="entry name" value="ANTENNAPEDIA"/>
    <property type="match status" value="1"/>
</dbReference>
<sequence>SGAAAAQTAAASSLHQASNHTFYPWMAIAGESTADPIKSKIRSDLTQYGGISTDMGKRYSESLAGSLLPDWLGTNGLRRRGRQTYTR</sequence>
<accession>Q23946</accession>
<feature type="chain" id="PRO_0000200267" description="Homeotic protein ultrabithorax">
    <location>
        <begin position="1" status="less than"/>
        <end position="87" status="greater than"/>
    </location>
</feature>
<feature type="short sequence motif" description="Antp-type hexapeptide">
    <location>
        <begin position="22"/>
        <end position="27"/>
    </location>
</feature>
<feature type="splice variant" id="VSP_002403" description="In isoform IVA." evidence="3">
    <location>
        <begin position="30"/>
        <end position="72"/>
    </location>
</feature>
<feature type="splice variant" id="VSP_002402" description="In isoform IIA." evidence="3">
    <location>
        <begin position="30"/>
        <end position="55"/>
    </location>
</feature>
<feature type="splice variant" id="VSP_002401" description="In isoform IA." evidence="3">
    <location>
        <begin position="30"/>
        <end position="38"/>
    </location>
</feature>
<feature type="splice variant" id="VSP_002404" description="In isoform IIB." evidence="3">
    <location>
        <begin position="39"/>
        <end position="55"/>
    </location>
</feature>
<feature type="non-terminal residue">
    <location>
        <position position="1"/>
    </location>
</feature>
<feature type="non-terminal residue">
    <location>
        <position position="87"/>
    </location>
</feature>
<evidence type="ECO:0000250" key="1"/>
<evidence type="ECO:0000269" key="2">
    <source>
    </source>
</evidence>
<evidence type="ECO:0000305" key="3"/>
<protein>
    <recommendedName>
        <fullName>Homeotic protein ultrabithorax</fullName>
    </recommendedName>
</protein>
<keyword id="KW-0010">Activator</keyword>
<keyword id="KW-0025">Alternative splicing</keyword>
<keyword id="KW-0217">Developmental protein</keyword>
<keyword id="KW-0238">DNA-binding</keyword>
<keyword id="KW-0371">Homeobox</keyword>
<keyword id="KW-0539">Nucleus</keyword>
<keyword id="KW-0804">Transcription</keyword>
<keyword id="KW-0805">Transcription regulation</keyword>
<comment type="function">
    <text evidence="1">Sequence-specific transcription factor which is part of a developmental regulatory system that provides cells with specific positional identities on the anterior-posterior axis. Binds the consensus region 5'-TTAAT[GT][GA]-3'. This homeotic protein controls development of the cells in the posterior thoracic and first abdominal segments. It activates the synthesis of the decapentaplegic (DPP) growth factor (By similarity).</text>
</comment>
<comment type="subcellular location">
    <subcellularLocation>
        <location>Nucleus</location>
    </subcellularLocation>
</comment>
<comment type="alternative products">
    <event type="alternative splicing"/>
    <isoform>
        <id>Q23946-1</id>
        <name>IB</name>
        <sequence type="displayed"/>
    </isoform>
    <isoform>
        <id>Q23946-2</id>
        <name>IA</name>
        <sequence type="described" ref="VSP_002401"/>
    </isoform>
    <isoform>
        <id>Q23946-3</id>
        <name>IIA</name>
        <sequence type="described" ref="VSP_002402"/>
    </isoform>
    <isoform>
        <id>Q23946-4</id>
        <name>IIB</name>
        <sequence type="described" ref="VSP_002404"/>
    </isoform>
    <isoform>
        <id>Q23946-5</id>
        <name>IVA</name>
        <sequence type="described" ref="VSP_002403"/>
    </isoform>
</comment>
<comment type="tissue specificity">
    <text evidence="2">In the embryo, expression is seen in the epidermis, somatic and visceral mesoderm, and the peripheral and central nervous system.</text>
</comment>
<comment type="similarity">
    <text evidence="3">Belongs to the Antp homeobox family.</text>
</comment>
<organism>
    <name type="scientific">Drosophila hydei</name>
    <name type="common">Fruit fly</name>
    <dbReference type="NCBI Taxonomy" id="7224"/>
    <lineage>
        <taxon>Eukaryota</taxon>
        <taxon>Metazoa</taxon>
        <taxon>Ecdysozoa</taxon>
        <taxon>Arthropoda</taxon>
        <taxon>Hexapoda</taxon>
        <taxon>Insecta</taxon>
        <taxon>Pterygota</taxon>
        <taxon>Neoptera</taxon>
        <taxon>Endopterygota</taxon>
        <taxon>Diptera</taxon>
        <taxon>Brachycera</taxon>
        <taxon>Muscomorpha</taxon>
        <taxon>Ephydroidea</taxon>
        <taxon>Drosophilidae</taxon>
        <taxon>Drosophila</taxon>
    </lineage>
</organism>
<proteinExistence type="evidence at transcript level"/>
<reference key="1">
    <citation type="journal article" date="1994" name="Genetics">
        <title>Evolutionary conservation of the structure and expression of alternatively spliced Ultrabithorax isoforms from Drosophila.</title>
        <authorList>
            <person name="Bomze H.M."/>
            <person name="Lopez A.J."/>
        </authorList>
    </citation>
    <scope>NUCLEOTIDE SEQUENCE [MRNA]</scope>
    <scope>ALTERNATIVE SPLICING</scope>
    <scope>TISSUE SPECIFICITY</scope>
    <source>
        <tissue>Embryo</tissue>
    </source>
</reference>
<gene>
    <name type="primary">Ubx</name>
</gene>